<comment type="function">
    <text evidence="1">Part of the twin-arginine translocation (Tat) system that transports large folded proteins containing a characteristic twin-arginine motif in their signal peptide across membranes. TatA could form the protein-conducting channel of the Tat system.</text>
</comment>
<comment type="subunit">
    <text evidence="1">Forms a complex with TatC.</text>
</comment>
<comment type="subcellular location">
    <subcellularLocation>
        <location evidence="1">Cell membrane</location>
        <topology evidence="1">Single-pass membrane protein</topology>
    </subcellularLocation>
</comment>
<comment type="similarity">
    <text evidence="1">Belongs to the TatA/E family.</text>
</comment>
<evidence type="ECO:0000255" key="1">
    <source>
        <dbReference type="HAMAP-Rule" id="MF_00236"/>
    </source>
</evidence>
<evidence type="ECO:0000256" key="2">
    <source>
        <dbReference type="SAM" id="MobiDB-lite"/>
    </source>
</evidence>
<dbReference type="EMBL" id="CP000027">
    <property type="protein sequence ID" value="AAW39126.1"/>
    <property type="molecule type" value="Genomic_DNA"/>
</dbReference>
<dbReference type="RefSeq" id="WP_010937273.1">
    <property type="nucleotide sequence ID" value="NC_002936.3"/>
</dbReference>
<dbReference type="SMR" id="Q3Z652"/>
<dbReference type="FunCoup" id="Q3Z652">
    <property type="interactions" value="34"/>
</dbReference>
<dbReference type="STRING" id="243164.DET1602"/>
<dbReference type="GeneID" id="3229083"/>
<dbReference type="KEGG" id="det:DET1602"/>
<dbReference type="eggNOG" id="COG1826">
    <property type="taxonomic scope" value="Bacteria"/>
</dbReference>
<dbReference type="HOGENOM" id="CLU_086034_6_2_0"/>
<dbReference type="InParanoid" id="Q3Z652"/>
<dbReference type="Proteomes" id="UP000008289">
    <property type="component" value="Chromosome"/>
</dbReference>
<dbReference type="GO" id="GO:0033281">
    <property type="term" value="C:TAT protein transport complex"/>
    <property type="evidence" value="ECO:0007669"/>
    <property type="project" value="UniProtKB-UniRule"/>
</dbReference>
<dbReference type="GO" id="GO:0008320">
    <property type="term" value="F:protein transmembrane transporter activity"/>
    <property type="evidence" value="ECO:0007669"/>
    <property type="project" value="UniProtKB-UniRule"/>
</dbReference>
<dbReference type="GO" id="GO:0043953">
    <property type="term" value="P:protein transport by the Tat complex"/>
    <property type="evidence" value="ECO:0007669"/>
    <property type="project" value="UniProtKB-UniRule"/>
</dbReference>
<dbReference type="Gene3D" id="1.20.5.3310">
    <property type="match status" value="1"/>
</dbReference>
<dbReference type="HAMAP" id="MF_00236">
    <property type="entry name" value="TatA_E"/>
    <property type="match status" value="1"/>
</dbReference>
<dbReference type="InterPro" id="IPR003369">
    <property type="entry name" value="TatA/B/E"/>
</dbReference>
<dbReference type="InterPro" id="IPR006312">
    <property type="entry name" value="TatA/E"/>
</dbReference>
<dbReference type="NCBIfam" id="TIGR01411">
    <property type="entry name" value="tatAE"/>
    <property type="match status" value="1"/>
</dbReference>
<dbReference type="PANTHER" id="PTHR42982">
    <property type="entry name" value="SEC-INDEPENDENT PROTEIN TRANSLOCASE PROTEIN TATA"/>
    <property type="match status" value="1"/>
</dbReference>
<dbReference type="PANTHER" id="PTHR42982:SF1">
    <property type="entry name" value="SEC-INDEPENDENT PROTEIN TRANSLOCASE PROTEIN TATA"/>
    <property type="match status" value="1"/>
</dbReference>
<dbReference type="Pfam" id="PF02416">
    <property type="entry name" value="TatA_B_E"/>
    <property type="match status" value="1"/>
</dbReference>
<proteinExistence type="inferred from homology"/>
<keyword id="KW-1003">Cell membrane</keyword>
<keyword id="KW-0472">Membrane</keyword>
<keyword id="KW-0653">Protein transport</keyword>
<keyword id="KW-0811">Translocation</keyword>
<keyword id="KW-0812">Transmembrane</keyword>
<keyword id="KW-1133">Transmembrane helix</keyword>
<keyword id="KW-0813">Transport</keyword>
<feature type="chain" id="PRO_1000044383" description="Sec-independent protein translocase protein TatA">
    <location>
        <begin position="1"/>
        <end position="65"/>
    </location>
</feature>
<feature type="transmembrane region" description="Helical" evidence="1">
    <location>
        <begin position="9"/>
        <end position="29"/>
    </location>
</feature>
<feature type="region of interest" description="Disordered" evidence="2">
    <location>
        <begin position="43"/>
        <end position="65"/>
    </location>
</feature>
<feature type="compositionally biased region" description="Acidic residues" evidence="2">
    <location>
        <begin position="45"/>
        <end position="54"/>
    </location>
</feature>
<feature type="compositionally biased region" description="Basic and acidic residues" evidence="2">
    <location>
        <begin position="55"/>
        <end position="65"/>
    </location>
</feature>
<sequence length="65" mass="7139">MPKIGPMEILIIVLLVVVVFGIGKLPQVGDAIGKGIRNFRKASSGEEEKEEVETKEETKTIEKSE</sequence>
<name>TATA_DEHM1</name>
<gene>
    <name evidence="1" type="primary">tatA</name>
    <name type="ordered locus">DET1602</name>
</gene>
<accession>Q3Z652</accession>
<reference key="1">
    <citation type="journal article" date="2005" name="Science">
        <title>Genome sequence of the PCE-dechlorinating bacterium Dehalococcoides ethenogenes.</title>
        <authorList>
            <person name="Seshadri R."/>
            <person name="Adrian L."/>
            <person name="Fouts D.E."/>
            <person name="Eisen J.A."/>
            <person name="Phillippy A.M."/>
            <person name="Methe B.A."/>
            <person name="Ward N.L."/>
            <person name="Nelson W.C."/>
            <person name="DeBoy R.T."/>
            <person name="Khouri H.M."/>
            <person name="Kolonay J.F."/>
            <person name="Dodson R.J."/>
            <person name="Daugherty S.C."/>
            <person name="Brinkac L.M."/>
            <person name="Sullivan S.A."/>
            <person name="Madupu R."/>
            <person name="Nelson K.E."/>
            <person name="Kang K.H."/>
            <person name="Impraim M."/>
            <person name="Tran K."/>
            <person name="Robinson J.M."/>
            <person name="Forberger H.A."/>
            <person name="Fraser C.M."/>
            <person name="Zinder S.H."/>
            <person name="Heidelberg J.F."/>
        </authorList>
    </citation>
    <scope>NUCLEOTIDE SEQUENCE [LARGE SCALE GENOMIC DNA]</scope>
    <source>
        <strain>ATCC BAA-2266 / KCTC 15142 / 195</strain>
    </source>
</reference>
<organism>
    <name type="scientific">Dehalococcoides mccartyi (strain ATCC BAA-2266 / KCTC 15142 / 195)</name>
    <name type="common">Dehalococcoides ethenogenes (strain 195)</name>
    <dbReference type="NCBI Taxonomy" id="243164"/>
    <lineage>
        <taxon>Bacteria</taxon>
        <taxon>Bacillati</taxon>
        <taxon>Chloroflexota</taxon>
        <taxon>Dehalococcoidia</taxon>
        <taxon>Dehalococcoidales</taxon>
        <taxon>Dehalococcoidaceae</taxon>
        <taxon>Dehalococcoides</taxon>
    </lineage>
</organism>
<protein>
    <recommendedName>
        <fullName evidence="1">Sec-independent protein translocase protein TatA</fullName>
    </recommendedName>
</protein>